<sequence>MGTPSDRTTTLSLCLAVCVVVIAVGTGWASEAGEGAHQVDSAAQMKDFGWRVLNFAVLAALLGWAIAKAQVKKALNERQVKIERSLREAEQSRDAAEQKLREYSGKLEHASREIEEMRGAMLRESEQEKQRIIAEARAAAEKIAGQATLSAEHEVLKARSALQAEAGRLAVQLAATKLAGAIGKEDHDLYVDDYLKKVEQFK</sequence>
<reference key="1">
    <citation type="submission" date="2006-10" db="EMBL/GenBank/DDBJ databases">
        <title>Complete sequence of chromosome of Pelobacter propionicus DSM 2379.</title>
        <authorList>
            <consortium name="US DOE Joint Genome Institute"/>
            <person name="Copeland A."/>
            <person name="Lucas S."/>
            <person name="Lapidus A."/>
            <person name="Barry K."/>
            <person name="Detter J.C."/>
            <person name="Glavina del Rio T."/>
            <person name="Hammon N."/>
            <person name="Israni S."/>
            <person name="Dalin E."/>
            <person name="Tice H."/>
            <person name="Pitluck S."/>
            <person name="Saunders E."/>
            <person name="Brettin T."/>
            <person name="Bruce D."/>
            <person name="Han C."/>
            <person name="Tapia R."/>
            <person name="Schmutz J."/>
            <person name="Larimer F."/>
            <person name="Land M."/>
            <person name="Hauser L."/>
            <person name="Kyrpides N."/>
            <person name="Kim E."/>
            <person name="Lovley D."/>
            <person name="Richardson P."/>
        </authorList>
    </citation>
    <scope>NUCLEOTIDE SEQUENCE [LARGE SCALE GENOMIC DNA]</scope>
    <source>
        <strain>DSM 2379 / NBRC 103807 / OttBd1</strain>
    </source>
</reference>
<protein>
    <recommendedName>
        <fullName evidence="1">ATP synthase subunit b</fullName>
    </recommendedName>
    <alternativeName>
        <fullName evidence="1">ATP synthase F(0) sector subunit b</fullName>
    </alternativeName>
    <alternativeName>
        <fullName evidence="1">ATPase subunit I</fullName>
    </alternativeName>
    <alternativeName>
        <fullName evidence="1">F-type ATPase subunit b</fullName>
        <shortName evidence="1">F-ATPase subunit b</shortName>
    </alternativeName>
</protein>
<evidence type="ECO:0000255" key="1">
    <source>
        <dbReference type="HAMAP-Rule" id="MF_01398"/>
    </source>
</evidence>
<name>ATPF_PELPD</name>
<gene>
    <name evidence="1" type="primary">atpF1</name>
    <name type="ordered locus">Ppro_0602</name>
</gene>
<gene>
    <name evidence="1" type="primary">atpF2</name>
    <name type="ordered locus">Ppro_1503</name>
</gene>
<feature type="chain" id="PRO_5000181802" description="ATP synthase subunit b">
    <location>
        <begin position="1"/>
        <end position="202"/>
    </location>
</feature>
<feature type="transmembrane region" description="Helical" evidence="1">
    <location>
        <begin position="9"/>
        <end position="29"/>
    </location>
</feature>
<dbReference type="EMBL" id="CP000482">
    <property type="protein sequence ID" value="ABK98233.1"/>
    <property type="molecule type" value="Genomic_DNA"/>
</dbReference>
<dbReference type="EMBL" id="CP000482">
    <property type="protein sequence ID" value="ABK99118.1"/>
    <property type="molecule type" value="Genomic_DNA"/>
</dbReference>
<dbReference type="RefSeq" id="WP_011734546.1">
    <property type="nucleotide sequence ID" value="NC_008609.1"/>
</dbReference>
<dbReference type="SMR" id="A1ALL3"/>
<dbReference type="STRING" id="338966.Ppro_0602"/>
<dbReference type="KEGG" id="ppd:Ppro_0602"/>
<dbReference type="KEGG" id="ppd:Ppro_1503"/>
<dbReference type="eggNOG" id="COG0711">
    <property type="taxonomic scope" value="Bacteria"/>
</dbReference>
<dbReference type="HOGENOM" id="CLU_079215_3_2_7"/>
<dbReference type="OrthoDB" id="5471016at2"/>
<dbReference type="Proteomes" id="UP000006732">
    <property type="component" value="Chromosome"/>
</dbReference>
<dbReference type="GO" id="GO:0005886">
    <property type="term" value="C:plasma membrane"/>
    <property type="evidence" value="ECO:0007669"/>
    <property type="project" value="UniProtKB-SubCell"/>
</dbReference>
<dbReference type="GO" id="GO:0045259">
    <property type="term" value="C:proton-transporting ATP synthase complex"/>
    <property type="evidence" value="ECO:0007669"/>
    <property type="project" value="UniProtKB-KW"/>
</dbReference>
<dbReference type="GO" id="GO:0046933">
    <property type="term" value="F:proton-transporting ATP synthase activity, rotational mechanism"/>
    <property type="evidence" value="ECO:0007669"/>
    <property type="project" value="UniProtKB-UniRule"/>
</dbReference>
<dbReference type="CDD" id="cd06503">
    <property type="entry name" value="ATP-synt_Fo_b"/>
    <property type="match status" value="1"/>
</dbReference>
<dbReference type="HAMAP" id="MF_01398">
    <property type="entry name" value="ATP_synth_b_bprime"/>
    <property type="match status" value="1"/>
</dbReference>
<dbReference type="InterPro" id="IPR002146">
    <property type="entry name" value="ATP_synth_b/b'su_bac/chlpt"/>
</dbReference>
<dbReference type="PANTHER" id="PTHR34264">
    <property type="entry name" value="ATP SYNTHASE SUBUNIT B, CHLOROPLASTIC"/>
    <property type="match status" value="1"/>
</dbReference>
<dbReference type="PANTHER" id="PTHR34264:SF3">
    <property type="entry name" value="ATP SYNTHASE SUBUNIT B, CHLOROPLASTIC"/>
    <property type="match status" value="1"/>
</dbReference>
<dbReference type="Pfam" id="PF00430">
    <property type="entry name" value="ATP-synt_B"/>
    <property type="match status" value="1"/>
</dbReference>
<comment type="function">
    <text evidence="1">F(1)F(0) ATP synthase produces ATP from ADP in the presence of a proton or sodium gradient. F-type ATPases consist of two structural domains, F(1) containing the extramembraneous catalytic core and F(0) containing the membrane proton channel, linked together by a central stalk and a peripheral stalk. During catalysis, ATP synthesis in the catalytic domain of F(1) is coupled via a rotary mechanism of the central stalk subunits to proton translocation.</text>
</comment>
<comment type="function">
    <text evidence="1">Component of the F(0) channel, it forms part of the peripheral stalk, linking F(1) to F(0).</text>
</comment>
<comment type="subunit">
    <text evidence="1">F-type ATPases have 2 components, F(1) - the catalytic core - and F(0) - the membrane proton channel. F(1) has five subunits: alpha(3), beta(3), gamma(1), delta(1), epsilon(1). F(0) has three main subunits: a(1), b(2) and c(10-14). The alpha and beta chains form an alternating ring which encloses part of the gamma chain. F(1) is attached to F(0) by a central stalk formed by the gamma and epsilon chains, while a peripheral stalk is formed by the delta and b chains.</text>
</comment>
<comment type="subcellular location">
    <subcellularLocation>
        <location evidence="1">Cell inner membrane</location>
        <topology evidence="1">Single-pass membrane protein</topology>
    </subcellularLocation>
</comment>
<comment type="similarity">
    <text evidence="1">Belongs to the ATPase B chain family.</text>
</comment>
<organism>
    <name type="scientific">Pelobacter propionicus (strain DSM 2379 / NBRC 103807 / OttBd1)</name>
    <dbReference type="NCBI Taxonomy" id="338966"/>
    <lineage>
        <taxon>Bacteria</taxon>
        <taxon>Pseudomonadati</taxon>
        <taxon>Thermodesulfobacteriota</taxon>
        <taxon>Desulfuromonadia</taxon>
        <taxon>Desulfuromonadales</taxon>
        <taxon>Desulfuromonadaceae</taxon>
        <taxon>Pelobacter</taxon>
    </lineage>
</organism>
<accession>A1ALL3</accession>
<proteinExistence type="inferred from homology"/>
<keyword id="KW-0066">ATP synthesis</keyword>
<keyword id="KW-0997">Cell inner membrane</keyword>
<keyword id="KW-1003">Cell membrane</keyword>
<keyword id="KW-0138">CF(0)</keyword>
<keyword id="KW-0375">Hydrogen ion transport</keyword>
<keyword id="KW-0406">Ion transport</keyword>
<keyword id="KW-0472">Membrane</keyword>
<keyword id="KW-1185">Reference proteome</keyword>
<keyword id="KW-0812">Transmembrane</keyword>
<keyword id="KW-1133">Transmembrane helix</keyword>
<keyword id="KW-0813">Transport</keyword>